<organism>
    <name type="scientific">Mus musculus</name>
    <name type="common">Mouse</name>
    <dbReference type="NCBI Taxonomy" id="10090"/>
    <lineage>
        <taxon>Eukaryota</taxon>
        <taxon>Metazoa</taxon>
        <taxon>Chordata</taxon>
        <taxon>Craniata</taxon>
        <taxon>Vertebrata</taxon>
        <taxon>Euteleostomi</taxon>
        <taxon>Mammalia</taxon>
        <taxon>Eutheria</taxon>
        <taxon>Euarchontoglires</taxon>
        <taxon>Glires</taxon>
        <taxon>Rodentia</taxon>
        <taxon>Myomorpha</taxon>
        <taxon>Muroidea</taxon>
        <taxon>Muridae</taxon>
        <taxon>Murinae</taxon>
        <taxon>Mus</taxon>
        <taxon>Mus</taxon>
    </lineage>
</organism>
<sequence>MKDSGDSKDQQLMVALRVRPISVAELEEGATLIAHKMDEQMVVLMDPMEDPDDILRAHRSREKSYLFDVAFDFTATQEMVYQATTKSLIEGVISGYNATVFAYGPTGCGKTYTMLGTDHEPGIYVRTLNDLFRAIEETSNDMEYEVSMSYLEIYNEMIRDLLNPALGYLELREDSKGVIQVAGITEVSTINAKEIMQLLMKGNRQRTQEPTAANQTSSRSHAVLQVAVRQRSRVKNILQEVRQGRLFMIDLAGSERASQTQNRGQRMKEGAHINRSLLALGNCINALSDKGSNKYINYRDSKLTRLLKDSLGGNSRTVMIAHISPASTAFEESRNTLTYAGRAKNIRTRVKQNLLNVSYHIAQYTSIIADLRGEIQRLKCKIDQQAGRGQARGKLDRGDIRHIQAEVQLHSGQEGPAEMGQLREQLISAFHEQMDVRRRLLELENQAMEVQIDTSRHLLTIAGWEHEKSRRALKWREERRKESYTKEDSEKDSDTGDEPDNLEPPEVASARENIAALVGEQKKLRKEKLALEQRCRELRARGRRLEETLPRRIGSEEQREVLSLLCRVHELEVENTEMQSHALLRDSALRHRREAVRRLEQHRSLCDEIIQGQRQIIDDYNLEVPRHLEELYEVYLRELEEGSLERATIMDRVASRALQDSSLPKITPAGATLTPDSDLESVKTLSSEAQRPQNNTLPPLGTDSESYHVFKASPRAWQVKSSSVPTPPPIQVGSLVTQEAPPQDSLGSQINSSPESSENLSEILLSHKERKEILTRTKCISVKAAQRRSRALGTEGRHLLAPATERSSLSLHSLSEADDARPPGQLACKRPPSPTLQHAISEDNLSSSTGEGPSRAVGPRGDGTGSWVRGQKKCLSKKREESLEAKRRKRRSRSFEVTGQGLSRPKTHLLGPRPSEGLSDRRMPACGRPSPGVRHLGKVSLPLAKVKFPPNQNTGSGNPSPLLVAPNQAGVSRRATRGPSLPHGSSTFGKDGRLQHN</sequence>
<name>KIF19_MOUSE</name>
<dbReference type="EMBL" id="AL663079">
    <property type="status" value="NOT_ANNOTATED_CDS"/>
    <property type="molecule type" value="Genomic_DNA"/>
</dbReference>
<dbReference type="EMBL" id="AB054026">
    <property type="protein sequence ID" value="BAB32490.1"/>
    <property type="molecule type" value="Genomic_DNA"/>
</dbReference>
<dbReference type="CCDS" id="CCDS36367.1"/>
<dbReference type="RefSeq" id="NP_001096085.1">
    <property type="nucleotide sequence ID" value="NM_001102615.1"/>
</dbReference>
<dbReference type="PDB" id="5GSY">
    <property type="method" value="EM"/>
    <property type="resolution" value="7.00 A"/>
    <property type="chains" value="K=1-353"/>
</dbReference>
<dbReference type="PDB" id="5GSZ">
    <property type="method" value="X-ray"/>
    <property type="resolution" value="2.72 A"/>
    <property type="chains" value="A=1-353"/>
</dbReference>
<dbReference type="PDBsum" id="5GSY"/>
<dbReference type="PDBsum" id="5GSZ"/>
<dbReference type="EMDB" id="EMD-9538"/>
<dbReference type="SMR" id="Q99PT9"/>
<dbReference type="BioGRID" id="235048">
    <property type="interactions" value="35"/>
</dbReference>
<dbReference type="FunCoup" id="Q99PT9">
    <property type="interactions" value="36"/>
</dbReference>
<dbReference type="IntAct" id="Q99PT9">
    <property type="interactions" value="35"/>
</dbReference>
<dbReference type="STRING" id="10090.ENSMUSP00000081398"/>
<dbReference type="GlyGen" id="Q99PT9">
    <property type="glycosylation" value="1 site"/>
</dbReference>
<dbReference type="iPTMnet" id="Q99PT9"/>
<dbReference type="PhosphoSitePlus" id="Q99PT9"/>
<dbReference type="jPOST" id="Q99PT9"/>
<dbReference type="PaxDb" id="10090-ENSMUSP00000081398"/>
<dbReference type="ProteomicsDB" id="263445"/>
<dbReference type="Antibodypedia" id="31955">
    <property type="antibodies" value="84 antibodies from 20 providers"/>
</dbReference>
<dbReference type="Ensembl" id="ENSMUST00000084368.12">
    <property type="protein sequence ID" value="ENSMUSP00000081398.6"/>
    <property type="gene ID" value="ENSMUSG00000010021.14"/>
</dbReference>
<dbReference type="GeneID" id="286942"/>
<dbReference type="KEGG" id="mmu:286942"/>
<dbReference type="UCSC" id="uc007mfq.1">
    <property type="organism name" value="mouse"/>
</dbReference>
<dbReference type="AGR" id="MGI:2447024"/>
<dbReference type="CTD" id="286942"/>
<dbReference type="MGI" id="MGI:2447024">
    <property type="gene designation" value="Kif19a"/>
</dbReference>
<dbReference type="VEuPathDB" id="HostDB:ENSMUSG00000010021"/>
<dbReference type="eggNOG" id="KOG0242">
    <property type="taxonomic scope" value="Eukaryota"/>
</dbReference>
<dbReference type="GeneTree" id="ENSGT00940000160989"/>
<dbReference type="HOGENOM" id="CLU_001485_15_0_1"/>
<dbReference type="InParanoid" id="Q99PT9"/>
<dbReference type="OMA" id="GEQKQLC"/>
<dbReference type="OrthoDB" id="3176171at2759"/>
<dbReference type="PhylomeDB" id="Q99PT9"/>
<dbReference type="TreeFam" id="TF331721"/>
<dbReference type="Reactome" id="R-MMU-2132295">
    <property type="pathway name" value="MHC class II antigen presentation"/>
</dbReference>
<dbReference type="Reactome" id="R-MMU-6811434">
    <property type="pathway name" value="COPI-dependent Golgi-to-ER retrograde traffic"/>
</dbReference>
<dbReference type="Reactome" id="R-MMU-983189">
    <property type="pathway name" value="Kinesins"/>
</dbReference>
<dbReference type="BioGRID-ORCS" id="286942">
    <property type="hits" value="3 hits in 75 CRISPR screens"/>
</dbReference>
<dbReference type="PRO" id="PR:Q99PT9"/>
<dbReference type="Proteomes" id="UP000000589">
    <property type="component" value="Chromosome 11"/>
</dbReference>
<dbReference type="RNAct" id="Q99PT9">
    <property type="molecule type" value="protein"/>
</dbReference>
<dbReference type="Bgee" id="ENSMUSG00000010021">
    <property type="expression patterns" value="Expressed in islet of Langerhans and 49 other cell types or tissues"/>
</dbReference>
<dbReference type="ExpressionAtlas" id="Q99PT9">
    <property type="expression patterns" value="baseline and differential"/>
</dbReference>
<dbReference type="GO" id="GO:0005930">
    <property type="term" value="C:axoneme"/>
    <property type="evidence" value="ECO:0007669"/>
    <property type="project" value="GOC"/>
</dbReference>
<dbReference type="GO" id="GO:0005929">
    <property type="term" value="C:cilium"/>
    <property type="evidence" value="ECO:0000314"/>
    <property type="project" value="UniProtKB"/>
</dbReference>
<dbReference type="GO" id="GO:0005874">
    <property type="term" value="C:microtubule"/>
    <property type="evidence" value="ECO:0007669"/>
    <property type="project" value="UniProtKB-KW"/>
</dbReference>
<dbReference type="GO" id="GO:0005524">
    <property type="term" value="F:ATP binding"/>
    <property type="evidence" value="ECO:0007669"/>
    <property type="project" value="UniProtKB-KW"/>
</dbReference>
<dbReference type="GO" id="GO:0008017">
    <property type="term" value="F:microtubule binding"/>
    <property type="evidence" value="ECO:0007669"/>
    <property type="project" value="InterPro"/>
</dbReference>
<dbReference type="GO" id="GO:0008574">
    <property type="term" value="F:plus-end-directed microtubule motor activity"/>
    <property type="evidence" value="ECO:0000314"/>
    <property type="project" value="UniProtKB"/>
</dbReference>
<dbReference type="GO" id="GO:0060404">
    <property type="term" value="P:axonemal microtubule depolymerization"/>
    <property type="evidence" value="ECO:0000315"/>
    <property type="project" value="UniProtKB"/>
</dbReference>
<dbReference type="GO" id="GO:0007018">
    <property type="term" value="P:microtubule-based movement"/>
    <property type="evidence" value="ECO:0007669"/>
    <property type="project" value="InterPro"/>
</dbReference>
<dbReference type="GO" id="GO:0070462">
    <property type="term" value="P:plus-end specific microtubule depolymerization"/>
    <property type="evidence" value="ECO:0000315"/>
    <property type="project" value="UniProtKB"/>
</dbReference>
<dbReference type="CDD" id="cd01370">
    <property type="entry name" value="KISc_KIP3_like"/>
    <property type="match status" value="1"/>
</dbReference>
<dbReference type="FunFam" id="3.40.850.10:FF:000037">
    <property type="entry name" value="kinesin-like protein KIF19"/>
    <property type="match status" value="1"/>
</dbReference>
<dbReference type="Gene3D" id="3.40.850.10">
    <property type="entry name" value="Kinesin motor domain"/>
    <property type="match status" value="1"/>
</dbReference>
<dbReference type="InterPro" id="IPR027640">
    <property type="entry name" value="Kinesin-like_fam"/>
</dbReference>
<dbReference type="InterPro" id="IPR019821">
    <property type="entry name" value="Kinesin_motor_CS"/>
</dbReference>
<dbReference type="InterPro" id="IPR001752">
    <property type="entry name" value="Kinesin_motor_dom"/>
</dbReference>
<dbReference type="InterPro" id="IPR036961">
    <property type="entry name" value="Kinesin_motor_dom_sf"/>
</dbReference>
<dbReference type="InterPro" id="IPR027417">
    <property type="entry name" value="P-loop_NTPase"/>
</dbReference>
<dbReference type="PANTHER" id="PTHR47968">
    <property type="entry name" value="CENTROMERE PROTEIN E"/>
    <property type="match status" value="1"/>
</dbReference>
<dbReference type="PANTHER" id="PTHR47968:SF72">
    <property type="entry name" value="KINESIN-LIKE PROTEIN KIF19"/>
    <property type="match status" value="1"/>
</dbReference>
<dbReference type="Pfam" id="PF00225">
    <property type="entry name" value="Kinesin"/>
    <property type="match status" value="1"/>
</dbReference>
<dbReference type="PRINTS" id="PR00380">
    <property type="entry name" value="KINESINHEAVY"/>
</dbReference>
<dbReference type="SMART" id="SM00129">
    <property type="entry name" value="KISc"/>
    <property type="match status" value="1"/>
</dbReference>
<dbReference type="SUPFAM" id="SSF52540">
    <property type="entry name" value="P-loop containing nucleoside triphosphate hydrolases"/>
    <property type="match status" value="1"/>
</dbReference>
<dbReference type="PROSITE" id="PS00411">
    <property type="entry name" value="KINESIN_MOTOR_1"/>
    <property type="match status" value="1"/>
</dbReference>
<dbReference type="PROSITE" id="PS50067">
    <property type="entry name" value="KINESIN_MOTOR_2"/>
    <property type="match status" value="1"/>
</dbReference>
<gene>
    <name type="primary">Kif19</name>
    <name type="synonym">Kif19a</name>
</gene>
<reference key="1">
    <citation type="journal article" date="2009" name="PLoS Biol.">
        <title>Lineage-specific biology revealed by a finished genome assembly of the mouse.</title>
        <authorList>
            <person name="Church D.M."/>
            <person name="Goodstadt L."/>
            <person name="Hillier L.W."/>
            <person name="Zody M.C."/>
            <person name="Goldstein S."/>
            <person name="She X."/>
            <person name="Bult C.J."/>
            <person name="Agarwala R."/>
            <person name="Cherry J.L."/>
            <person name="DiCuccio M."/>
            <person name="Hlavina W."/>
            <person name="Kapustin Y."/>
            <person name="Meric P."/>
            <person name="Maglott D."/>
            <person name="Birtle Z."/>
            <person name="Marques A.C."/>
            <person name="Graves T."/>
            <person name="Zhou S."/>
            <person name="Teague B."/>
            <person name="Potamousis K."/>
            <person name="Churas C."/>
            <person name="Place M."/>
            <person name="Herschleb J."/>
            <person name="Runnheim R."/>
            <person name="Forrest D."/>
            <person name="Amos-Landgraf J."/>
            <person name="Schwartz D.C."/>
            <person name="Cheng Z."/>
            <person name="Lindblad-Toh K."/>
            <person name="Eichler E.E."/>
            <person name="Ponting C.P."/>
        </authorList>
    </citation>
    <scope>NUCLEOTIDE SEQUENCE [LARGE SCALE GENOMIC DNA]</scope>
    <source>
        <strain>C57BL/6J</strain>
    </source>
</reference>
<reference key="2">
    <citation type="journal article" date="2001" name="Proc. Natl. Acad. Sci. U.S.A.">
        <title>All kinesin superfamily protein, KIF, genes in mouse and human.</title>
        <authorList>
            <person name="Miki H."/>
            <person name="Setou M."/>
            <person name="Kaneshiro K."/>
        </authorList>
    </citation>
    <scope>NUCLEOTIDE SEQUENCE [GENOMIC DNA] OF 108-255</scope>
    <scope>TISSUE SPECIFICITY</scope>
</reference>
<reference key="3">
    <citation type="submission" date="2009-01" db="UniProtKB">
        <authorList>
            <person name="Lubec G."/>
            <person name="Sunyer B."/>
            <person name="Chen W.-Q."/>
        </authorList>
    </citation>
    <scope>PROTEIN SEQUENCE OF 335-347</scope>
    <scope>IDENTIFICATION BY MASS SPECTROMETRY</scope>
    <source>
        <strain>OF1</strain>
        <tissue>Hippocampus</tissue>
    </source>
</reference>
<reference key="4">
    <citation type="journal article" date="2012" name="Dev. Cell">
        <title>KIF19A is a microtubule-depolymerizing kinesin for ciliary length control.</title>
        <authorList>
            <person name="Niwa S."/>
            <person name="Nakajima K."/>
            <person name="Miki H."/>
            <person name="Minato Y."/>
            <person name="Wang D."/>
            <person name="Hirokawa N."/>
        </authorList>
    </citation>
    <scope>FUNCTION</scope>
    <scope>SUBCELLULAR LOCATION</scope>
    <scope>TISSUE SPECIFICITY</scope>
    <scope>DISRUPTION PHENOTYPE</scope>
</reference>
<comment type="function">
    <text evidence="5">Plus end-directed microtubule-dependent motor protein that regulates the length of motile cilia by mediating depolymerization of microtubules at ciliary tips.</text>
</comment>
<comment type="subcellular location">
    <subcellularLocation>
        <location evidence="7">Cytoplasm</location>
        <location evidence="7">Cytoskeleton</location>
    </subcellularLocation>
    <subcellularLocation>
        <location evidence="5">Cell projection</location>
        <location evidence="5">Cilium</location>
    </subcellularLocation>
    <text>Localizes to cilia tips.</text>
</comment>
<comment type="tissue specificity">
    <text evidence="4 5">Strongly expressed in the oviduct and trachea. Expressed in testis, lung, ovary and brain.</text>
</comment>
<comment type="disruption phenotype">
    <text evidence="5">Mice show growth retardation, higher mortality (4 weeks after birth) and display hydrocephalus as well as female infertility. Female infertility is probably caused by fallopian tube obstruction. Phenotypes are due to abnormally elongated cilia that cannot generate proper fluid flow.</text>
</comment>
<comment type="similarity">
    <text evidence="2">Belongs to the TRAFAC class myosin-kinesin ATPase superfamily. Kinesin family.</text>
</comment>
<accession>Q99PT9</accession>
<accession>A7DTH0</accession>
<protein>
    <recommendedName>
        <fullName>Kinesin-like protein KIF19</fullName>
    </recommendedName>
</protein>
<feature type="chain" id="PRO_0000278246" description="Kinesin-like protein KIF19">
    <location>
        <begin position="1"/>
        <end position="997"/>
    </location>
</feature>
<feature type="domain" description="Kinesin motor" evidence="2">
    <location>
        <begin position="11"/>
        <end position="346"/>
    </location>
</feature>
<feature type="region of interest" description="Disordered" evidence="3">
    <location>
        <begin position="477"/>
        <end position="509"/>
    </location>
</feature>
<feature type="region of interest" description="Disordered" evidence="3">
    <location>
        <begin position="665"/>
        <end position="704"/>
    </location>
</feature>
<feature type="region of interest" description="Disordered" evidence="3">
    <location>
        <begin position="718"/>
        <end position="759"/>
    </location>
</feature>
<feature type="region of interest" description="Disordered" evidence="3">
    <location>
        <begin position="784"/>
        <end position="997"/>
    </location>
</feature>
<feature type="coiled-coil region" evidence="1">
    <location>
        <begin position="361"/>
        <end position="388"/>
    </location>
</feature>
<feature type="coiled-coil region" evidence="1">
    <location>
        <begin position="506"/>
        <end position="551"/>
    </location>
</feature>
<feature type="compositionally biased region" description="Basic and acidic residues" evidence="3">
    <location>
        <begin position="477"/>
        <end position="494"/>
    </location>
</feature>
<feature type="compositionally biased region" description="Polar residues" evidence="3">
    <location>
        <begin position="683"/>
        <end position="697"/>
    </location>
</feature>
<feature type="compositionally biased region" description="Low complexity" evidence="3">
    <location>
        <begin position="750"/>
        <end position="759"/>
    </location>
</feature>
<feature type="compositionally biased region" description="Polar residues" evidence="3">
    <location>
        <begin position="835"/>
        <end position="851"/>
    </location>
</feature>
<feature type="compositionally biased region" description="Polar residues" evidence="3">
    <location>
        <begin position="950"/>
        <end position="959"/>
    </location>
</feature>
<feature type="binding site" evidence="2">
    <location>
        <begin position="104"/>
        <end position="111"/>
    </location>
    <ligand>
        <name>ATP</name>
        <dbReference type="ChEBI" id="CHEBI:30616"/>
    </ligand>
</feature>
<feature type="sequence conflict" description="In Ref. 2; BAB32490." evidence="6" ref="2">
    <original>C</original>
    <variation>T</variation>
    <location>
        <position position="108"/>
    </location>
</feature>
<feature type="strand" evidence="8">
    <location>
        <begin position="12"/>
        <end position="18"/>
    </location>
</feature>
<feature type="helix" evidence="8">
    <location>
        <begin position="23"/>
        <end position="27"/>
    </location>
</feature>
<feature type="strand" evidence="8">
    <location>
        <begin position="34"/>
        <end position="36"/>
    </location>
</feature>
<feature type="strand" evidence="8">
    <location>
        <begin position="38"/>
        <end position="45"/>
    </location>
</feature>
<feature type="strand" evidence="8">
    <location>
        <begin position="61"/>
        <end position="66"/>
    </location>
</feature>
<feature type="strand" evidence="8">
    <location>
        <begin position="68"/>
        <end position="71"/>
    </location>
</feature>
<feature type="helix" evidence="8">
    <location>
        <begin position="77"/>
        <end position="84"/>
    </location>
</feature>
<feature type="helix" evidence="8">
    <location>
        <begin position="86"/>
        <end position="88"/>
    </location>
</feature>
<feature type="helix" evidence="8">
    <location>
        <begin position="89"/>
        <end position="93"/>
    </location>
</feature>
<feature type="strand" evidence="8">
    <location>
        <begin position="97"/>
        <end position="105"/>
    </location>
</feature>
<feature type="helix" evidence="8">
    <location>
        <begin position="110"/>
        <end position="114"/>
    </location>
</feature>
<feature type="strand" evidence="8">
    <location>
        <begin position="118"/>
        <end position="121"/>
    </location>
</feature>
<feature type="helix" evidence="8">
    <location>
        <begin position="123"/>
        <end position="136"/>
    </location>
</feature>
<feature type="turn" evidence="8">
    <location>
        <begin position="137"/>
        <end position="141"/>
    </location>
</feature>
<feature type="strand" evidence="8">
    <location>
        <begin position="142"/>
        <end position="154"/>
    </location>
</feature>
<feature type="strand" evidence="8">
    <location>
        <begin position="157"/>
        <end position="160"/>
    </location>
</feature>
<feature type="helix" evidence="8">
    <location>
        <begin position="164"/>
        <end position="166"/>
    </location>
</feature>
<feature type="strand" evidence="8">
    <location>
        <begin position="171"/>
        <end position="173"/>
    </location>
</feature>
<feature type="strand" evidence="8">
    <location>
        <begin position="179"/>
        <end position="181"/>
    </location>
</feature>
<feature type="helix" evidence="8">
    <location>
        <begin position="192"/>
        <end position="203"/>
    </location>
</feature>
<feature type="strand" evidence="8">
    <location>
        <begin position="220"/>
        <end position="233"/>
    </location>
</feature>
<feature type="strand" evidence="8">
    <location>
        <begin position="242"/>
        <end position="250"/>
    </location>
</feature>
<feature type="helix" evidence="8">
    <location>
        <begin position="283"/>
        <end position="288"/>
    </location>
</feature>
<feature type="turn" evidence="8">
    <location>
        <begin position="289"/>
        <end position="291"/>
    </location>
</feature>
<feature type="helix" evidence="8">
    <location>
        <begin position="302"/>
        <end position="307"/>
    </location>
</feature>
<feature type="strand" evidence="8">
    <location>
        <begin position="308"/>
        <end position="312"/>
    </location>
</feature>
<feature type="strand" evidence="8">
    <location>
        <begin position="315"/>
        <end position="323"/>
    </location>
</feature>
<feature type="helix" evidence="8">
    <location>
        <begin position="327"/>
        <end position="329"/>
    </location>
</feature>
<feature type="helix" evidence="8">
    <location>
        <begin position="330"/>
        <end position="340"/>
    </location>
</feature>
<evidence type="ECO:0000255" key="1"/>
<evidence type="ECO:0000255" key="2">
    <source>
        <dbReference type="PROSITE-ProRule" id="PRU00283"/>
    </source>
</evidence>
<evidence type="ECO:0000256" key="3">
    <source>
        <dbReference type="SAM" id="MobiDB-lite"/>
    </source>
</evidence>
<evidence type="ECO:0000269" key="4">
    <source>
    </source>
</evidence>
<evidence type="ECO:0000269" key="5">
    <source>
    </source>
</evidence>
<evidence type="ECO:0000305" key="6"/>
<evidence type="ECO:0000305" key="7">
    <source>
    </source>
</evidence>
<evidence type="ECO:0007829" key="8">
    <source>
        <dbReference type="PDB" id="5GSZ"/>
    </source>
</evidence>
<proteinExistence type="evidence at protein level"/>
<keyword id="KW-0002">3D-structure</keyword>
<keyword id="KW-0067">ATP-binding</keyword>
<keyword id="KW-0966">Cell projection</keyword>
<keyword id="KW-0969">Cilium</keyword>
<keyword id="KW-0175">Coiled coil</keyword>
<keyword id="KW-0963">Cytoplasm</keyword>
<keyword id="KW-0206">Cytoskeleton</keyword>
<keyword id="KW-0903">Direct protein sequencing</keyword>
<keyword id="KW-0493">Microtubule</keyword>
<keyword id="KW-0505">Motor protein</keyword>
<keyword id="KW-0547">Nucleotide-binding</keyword>
<keyword id="KW-1185">Reference proteome</keyword>